<sequence length="492" mass="53712">MANYFNTLNLRQQLDQLGKCRFMGRDEFADEASYLKGKKVVIVGCGAQGLNQGLNMRDSGLDIAYALRAEAIAEKRASWRKATENGFTVGTYEDLIPQADLVVNLTPDKQHSAVVQAVQPLMKQGAALGYSHGFNIVEVGEQIRKDITVVMVAPKCPGTEVREEYKRGFGVPTLIAVHPENDPKGEGMAIAKAWAAATGGHRAGVLQSSFVAEVKSDLMGEQTILCGMLQAGSLLSFDKLVAEGTDPAYAEKLIQFGWETITEALKQGGITLMMDRLSNPAKLRAYALSEQLKGIMAPLFQKHMDDIISGEFSSGMMADWANDDVKLLTWREETGKTAFENAPQFDGKIAEQEYFDNGVLMVAMVKAGVELAFETMVSSGIIEESAYYESLHELPLIANTIARKRLYEMNVVISDTAEYGNYLFANAAVPLLKDAFMASLQPGDLGKAVAGTEVDNAQLRDVNEAIRNHPIETVGQTLRGYMKDMKRIAVAG</sequence>
<name>ILVC_PECCP</name>
<accession>C6DHG3</accession>
<proteinExistence type="inferred from homology"/>
<keyword id="KW-0028">Amino-acid biosynthesis</keyword>
<keyword id="KW-0100">Branched-chain amino acid biosynthesis</keyword>
<keyword id="KW-0460">Magnesium</keyword>
<keyword id="KW-0479">Metal-binding</keyword>
<keyword id="KW-0521">NADP</keyword>
<keyword id="KW-0560">Oxidoreductase</keyword>
<keyword id="KW-0677">Repeat</keyword>
<gene>
    <name evidence="1" type="primary">ilvC</name>
    <name type="ordered locus">PC1_4021</name>
</gene>
<evidence type="ECO:0000255" key="1">
    <source>
        <dbReference type="HAMAP-Rule" id="MF_00435"/>
    </source>
</evidence>
<evidence type="ECO:0000255" key="2">
    <source>
        <dbReference type="PROSITE-ProRule" id="PRU01197"/>
    </source>
</evidence>
<evidence type="ECO:0000255" key="3">
    <source>
        <dbReference type="PROSITE-ProRule" id="PRU01198"/>
    </source>
</evidence>
<reference key="1">
    <citation type="submission" date="2009-07" db="EMBL/GenBank/DDBJ databases">
        <title>Complete sequence of Pectobacterium carotovorum subsp. carotovorum PC1.</title>
        <authorList>
            <consortium name="US DOE Joint Genome Institute"/>
            <person name="Lucas S."/>
            <person name="Copeland A."/>
            <person name="Lapidus A."/>
            <person name="Glavina del Rio T."/>
            <person name="Tice H."/>
            <person name="Bruce D."/>
            <person name="Goodwin L."/>
            <person name="Pitluck S."/>
            <person name="Munk A.C."/>
            <person name="Brettin T."/>
            <person name="Detter J.C."/>
            <person name="Han C."/>
            <person name="Tapia R."/>
            <person name="Larimer F."/>
            <person name="Land M."/>
            <person name="Hauser L."/>
            <person name="Kyrpides N."/>
            <person name="Mikhailova N."/>
            <person name="Balakrishnan V."/>
            <person name="Glasner J."/>
            <person name="Perna N.T."/>
        </authorList>
    </citation>
    <scope>NUCLEOTIDE SEQUENCE [LARGE SCALE GENOMIC DNA]</scope>
    <source>
        <strain>PC1</strain>
    </source>
</reference>
<comment type="function">
    <text evidence="1">Involved in the biosynthesis of branched-chain amino acids (BCAA). Catalyzes an alkyl-migration followed by a ketol-acid reduction of (S)-2-acetolactate (S2AL) to yield (R)-2,3-dihydroxy-isovalerate. In the isomerase reaction, S2AL is rearranged via a Mg-dependent methyl migration to produce 3-hydroxy-3-methyl-2-ketobutyrate (HMKB). In the reductase reaction, this 2-ketoacid undergoes a metal-dependent reduction by NADPH to yield (R)-2,3-dihydroxy-isovalerate.</text>
</comment>
<comment type="catalytic activity">
    <reaction evidence="1">
        <text>(2R)-2,3-dihydroxy-3-methylbutanoate + NADP(+) = (2S)-2-acetolactate + NADPH + H(+)</text>
        <dbReference type="Rhea" id="RHEA:22068"/>
        <dbReference type="ChEBI" id="CHEBI:15378"/>
        <dbReference type="ChEBI" id="CHEBI:49072"/>
        <dbReference type="ChEBI" id="CHEBI:57783"/>
        <dbReference type="ChEBI" id="CHEBI:58349"/>
        <dbReference type="ChEBI" id="CHEBI:58476"/>
        <dbReference type="EC" id="1.1.1.86"/>
    </reaction>
</comment>
<comment type="catalytic activity">
    <reaction evidence="1">
        <text>(2R,3R)-2,3-dihydroxy-3-methylpentanoate + NADP(+) = (S)-2-ethyl-2-hydroxy-3-oxobutanoate + NADPH + H(+)</text>
        <dbReference type="Rhea" id="RHEA:13493"/>
        <dbReference type="ChEBI" id="CHEBI:15378"/>
        <dbReference type="ChEBI" id="CHEBI:49256"/>
        <dbReference type="ChEBI" id="CHEBI:49258"/>
        <dbReference type="ChEBI" id="CHEBI:57783"/>
        <dbReference type="ChEBI" id="CHEBI:58349"/>
        <dbReference type="EC" id="1.1.1.86"/>
    </reaction>
</comment>
<comment type="cofactor">
    <cofactor evidence="1">
        <name>Mg(2+)</name>
        <dbReference type="ChEBI" id="CHEBI:18420"/>
    </cofactor>
    <text evidence="1">Binds 2 magnesium ions per subunit.</text>
</comment>
<comment type="pathway">
    <text evidence="1">Amino-acid biosynthesis; L-isoleucine biosynthesis; L-isoleucine from 2-oxobutanoate: step 2/4.</text>
</comment>
<comment type="pathway">
    <text evidence="1">Amino-acid biosynthesis; L-valine biosynthesis; L-valine from pyruvate: step 2/4.</text>
</comment>
<comment type="similarity">
    <text evidence="1">Belongs to the ketol-acid reductoisomerase family.</text>
</comment>
<organism>
    <name type="scientific">Pectobacterium carotovorum subsp. carotovorum (strain PC1)</name>
    <dbReference type="NCBI Taxonomy" id="561230"/>
    <lineage>
        <taxon>Bacteria</taxon>
        <taxon>Pseudomonadati</taxon>
        <taxon>Pseudomonadota</taxon>
        <taxon>Gammaproteobacteria</taxon>
        <taxon>Enterobacterales</taxon>
        <taxon>Pectobacteriaceae</taxon>
        <taxon>Pectobacterium</taxon>
    </lineage>
</organism>
<feature type="chain" id="PRO_1000206085" description="Ketol-acid reductoisomerase (NADP(+))">
    <location>
        <begin position="1"/>
        <end position="492"/>
    </location>
</feature>
<feature type="domain" description="KARI N-terminal Rossmann" evidence="2">
    <location>
        <begin position="14"/>
        <end position="208"/>
    </location>
</feature>
<feature type="domain" description="KARI C-terminal knotted 1" evidence="3">
    <location>
        <begin position="209"/>
        <end position="344"/>
    </location>
</feature>
<feature type="domain" description="KARI C-terminal knotted 2" evidence="3">
    <location>
        <begin position="345"/>
        <end position="485"/>
    </location>
</feature>
<feature type="active site" evidence="1">
    <location>
        <position position="132"/>
    </location>
</feature>
<feature type="binding site" evidence="1">
    <location>
        <begin position="45"/>
        <end position="48"/>
    </location>
    <ligand>
        <name>NADP(+)</name>
        <dbReference type="ChEBI" id="CHEBI:58349"/>
    </ligand>
</feature>
<feature type="binding site" evidence="1">
    <location>
        <position position="68"/>
    </location>
    <ligand>
        <name>NADP(+)</name>
        <dbReference type="ChEBI" id="CHEBI:58349"/>
    </ligand>
</feature>
<feature type="binding site" evidence="1">
    <location>
        <position position="76"/>
    </location>
    <ligand>
        <name>NADP(+)</name>
        <dbReference type="ChEBI" id="CHEBI:58349"/>
    </ligand>
</feature>
<feature type="binding site" evidence="1">
    <location>
        <position position="78"/>
    </location>
    <ligand>
        <name>NADP(+)</name>
        <dbReference type="ChEBI" id="CHEBI:58349"/>
    </ligand>
</feature>
<feature type="binding site" evidence="1">
    <location>
        <begin position="108"/>
        <end position="110"/>
    </location>
    <ligand>
        <name>NADP(+)</name>
        <dbReference type="ChEBI" id="CHEBI:58349"/>
    </ligand>
</feature>
<feature type="binding site" evidence="1">
    <location>
        <position position="158"/>
    </location>
    <ligand>
        <name>NADP(+)</name>
        <dbReference type="ChEBI" id="CHEBI:58349"/>
    </ligand>
</feature>
<feature type="binding site" evidence="1">
    <location>
        <position position="217"/>
    </location>
    <ligand>
        <name>Mg(2+)</name>
        <dbReference type="ChEBI" id="CHEBI:18420"/>
        <label>1</label>
    </ligand>
</feature>
<feature type="binding site" evidence="1">
    <location>
        <position position="217"/>
    </location>
    <ligand>
        <name>Mg(2+)</name>
        <dbReference type="ChEBI" id="CHEBI:18420"/>
        <label>2</label>
    </ligand>
</feature>
<feature type="binding site" evidence="1">
    <location>
        <position position="221"/>
    </location>
    <ligand>
        <name>Mg(2+)</name>
        <dbReference type="ChEBI" id="CHEBI:18420"/>
        <label>1</label>
    </ligand>
</feature>
<feature type="binding site" evidence="1">
    <location>
        <position position="389"/>
    </location>
    <ligand>
        <name>Mg(2+)</name>
        <dbReference type="ChEBI" id="CHEBI:18420"/>
        <label>2</label>
    </ligand>
</feature>
<feature type="binding site" evidence="1">
    <location>
        <position position="393"/>
    </location>
    <ligand>
        <name>Mg(2+)</name>
        <dbReference type="ChEBI" id="CHEBI:18420"/>
        <label>2</label>
    </ligand>
</feature>
<feature type="binding site" evidence="1">
    <location>
        <position position="414"/>
    </location>
    <ligand>
        <name>substrate</name>
    </ligand>
</feature>
<protein>
    <recommendedName>
        <fullName evidence="1">Ketol-acid reductoisomerase (NADP(+))</fullName>
        <shortName evidence="1">KARI</shortName>
        <ecNumber evidence="1">1.1.1.86</ecNumber>
    </recommendedName>
    <alternativeName>
        <fullName evidence="1">Acetohydroxy-acid isomeroreductase</fullName>
        <shortName evidence="1">AHIR</shortName>
    </alternativeName>
    <alternativeName>
        <fullName evidence="1">Alpha-keto-beta-hydroxylacyl reductoisomerase</fullName>
    </alternativeName>
    <alternativeName>
        <fullName evidence="1">Ketol-acid reductoisomerase type 2</fullName>
    </alternativeName>
    <alternativeName>
        <fullName evidence="1">Ketol-acid reductoisomerase type II</fullName>
    </alternativeName>
</protein>
<dbReference type="EC" id="1.1.1.86" evidence="1"/>
<dbReference type="EMBL" id="CP001657">
    <property type="protein sequence ID" value="ACT15036.1"/>
    <property type="molecule type" value="Genomic_DNA"/>
</dbReference>
<dbReference type="RefSeq" id="WP_015842115.1">
    <property type="nucleotide sequence ID" value="NC_012917.1"/>
</dbReference>
<dbReference type="SMR" id="C6DHG3"/>
<dbReference type="STRING" id="561230.PC1_4021"/>
<dbReference type="GeneID" id="67792062"/>
<dbReference type="KEGG" id="pct:PC1_4021"/>
<dbReference type="eggNOG" id="COG0059">
    <property type="taxonomic scope" value="Bacteria"/>
</dbReference>
<dbReference type="HOGENOM" id="CLU_551905_0_0_6"/>
<dbReference type="OrthoDB" id="9804088at2"/>
<dbReference type="UniPathway" id="UPA00047">
    <property type="reaction ID" value="UER00056"/>
</dbReference>
<dbReference type="UniPathway" id="UPA00049">
    <property type="reaction ID" value="UER00060"/>
</dbReference>
<dbReference type="Proteomes" id="UP000002736">
    <property type="component" value="Chromosome"/>
</dbReference>
<dbReference type="GO" id="GO:0005829">
    <property type="term" value="C:cytosol"/>
    <property type="evidence" value="ECO:0007669"/>
    <property type="project" value="TreeGrafter"/>
</dbReference>
<dbReference type="GO" id="GO:0004455">
    <property type="term" value="F:ketol-acid reductoisomerase activity"/>
    <property type="evidence" value="ECO:0007669"/>
    <property type="project" value="UniProtKB-UniRule"/>
</dbReference>
<dbReference type="GO" id="GO:0000287">
    <property type="term" value="F:magnesium ion binding"/>
    <property type="evidence" value="ECO:0007669"/>
    <property type="project" value="UniProtKB-UniRule"/>
</dbReference>
<dbReference type="GO" id="GO:0009097">
    <property type="term" value="P:isoleucine biosynthetic process"/>
    <property type="evidence" value="ECO:0007669"/>
    <property type="project" value="UniProtKB-UniRule"/>
</dbReference>
<dbReference type="GO" id="GO:0009099">
    <property type="term" value="P:L-valine biosynthetic process"/>
    <property type="evidence" value="ECO:0007669"/>
    <property type="project" value="UniProtKB-UniRule"/>
</dbReference>
<dbReference type="FunFam" id="1.10.1040.10:FF:000007">
    <property type="entry name" value="Ketol-acid reductoisomerase (NADP(+))"/>
    <property type="match status" value="1"/>
</dbReference>
<dbReference type="FunFam" id="3.40.50.720:FF:000043">
    <property type="entry name" value="Ketol-acid reductoisomerase (NADP(+))"/>
    <property type="match status" value="1"/>
</dbReference>
<dbReference type="Gene3D" id="1.10.1040.10">
    <property type="entry name" value="N-(1-d-carboxylethyl)-l-norvaline Dehydrogenase, domain 2"/>
    <property type="match status" value="1"/>
</dbReference>
<dbReference type="Gene3D" id="3.40.50.720">
    <property type="entry name" value="NAD(P)-binding Rossmann-like Domain"/>
    <property type="match status" value="1"/>
</dbReference>
<dbReference type="HAMAP" id="MF_00435">
    <property type="entry name" value="IlvC"/>
    <property type="match status" value="1"/>
</dbReference>
<dbReference type="InterPro" id="IPR008927">
    <property type="entry name" value="6-PGluconate_DH-like_C_sf"/>
</dbReference>
<dbReference type="InterPro" id="IPR013328">
    <property type="entry name" value="6PGD_dom2"/>
</dbReference>
<dbReference type="InterPro" id="IPR013023">
    <property type="entry name" value="KARI"/>
</dbReference>
<dbReference type="InterPro" id="IPR000506">
    <property type="entry name" value="KARI_C"/>
</dbReference>
<dbReference type="InterPro" id="IPR013116">
    <property type="entry name" value="KARI_N"/>
</dbReference>
<dbReference type="InterPro" id="IPR036291">
    <property type="entry name" value="NAD(P)-bd_dom_sf"/>
</dbReference>
<dbReference type="NCBIfam" id="TIGR00465">
    <property type="entry name" value="ilvC"/>
    <property type="match status" value="1"/>
</dbReference>
<dbReference type="NCBIfam" id="NF003557">
    <property type="entry name" value="PRK05225.1"/>
    <property type="match status" value="1"/>
</dbReference>
<dbReference type="PANTHER" id="PTHR21371">
    <property type="entry name" value="KETOL-ACID REDUCTOISOMERASE, MITOCHONDRIAL"/>
    <property type="match status" value="1"/>
</dbReference>
<dbReference type="PANTHER" id="PTHR21371:SF1">
    <property type="entry name" value="KETOL-ACID REDUCTOISOMERASE, MITOCHONDRIAL"/>
    <property type="match status" value="1"/>
</dbReference>
<dbReference type="Pfam" id="PF01450">
    <property type="entry name" value="KARI_C"/>
    <property type="match status" value="2"/>
</dbReference>
<dbReference type="Pfam" id="PF07991">
    <property type="entry name" value="KARI_N"/>
    <property type="match status" value="1"/>
</dbReference>
<dbReference type="SUPFAM" id="SSF48179">
    <property type="entry name" value="6-phosphogluconate dehydrogenase C-terminal domain-like"/>
    <property type="match status" value="2"/>
</dbReference>
<dbReference type="SUPFAM" id="SSF51735">
    <property type="entry name" value="NAD(P)-binding Rossmann-fold domains"/>
    <property type="match status" value="1"/>
</dbReference>
<dbReference type="PROSITE" id="PS51851">
    <property type="entry name" value="KARI_C"/>
    <property type="match status" value="2"/>
</dbReference>
<dbReference type="PROSITE" id="PS51850">
    <property type="entry name" value="KARI_N"/>
    <property type="match status" value="1"/>
</dbReference>